<sequence>MKIRPLHDRVLVKRQEVESKSAGGIVLTGSAAGKSTRGTVTAVGKGRVLDNGDIKPLDVKVGDVVIFNEGYGAKTEKIDNEELLILTESDILAIVE</sequence>
<dbReference type="EMBL" id="CP001158">
    <property type="protein sequence ID" value="ACL29850.1"/>
    <property type="molecule type" value="Genomic_DNA"/>
</dbReference>
<dbReference type="RefSeq" id="WP_009873979.1">
    <property type="nucleotide sequence ID" value="NC_011834.1"/>
</dbReference>
<dbReference type="SMR" id="B8D6T5"/>
<dbReference type="KEGG" id="bau:BUAPTUC7_018"/>
<dbReference type="HOGENOM" id="CLU_132825_1_1_6"/>
<dbReference type="GO" id="GO:0005737">
    <property type="term" value="C:cytoplasm"/>
    <property type="evidence" value="ECO:0007669"/>
    <property type="project" value="UniProtKB-SubCell"/>
</dbReference>
<dbReference type="GO" id="GO:0005524">
    <property type="term" value="F:ATP binding"/>
    <property type="evidence" value="ECO:0007669"/>
    <property type="project" value="InterPro"/>
</dbReference>
<dbReference type="GO" id="GO:0046872">
    <property type="term" value="F:metal ion binding"/>
    <property type="evidence" value="ECO:0007669"/>
    <property type="project" value="TreeGrafter"/>
</dbReference>
<dbReference type="GO" id="GO:0044183">
    <property type="term" value="F:protein folding chaperone"/>
    <property type="evidence" value="ECO:0007669"/>
    <property type="project" value="InterPro"/>
</dbReference>
<dbReference type="GO" id="GO:0051087">
    <property type="term" value="F:protein-folding chaperone binding"/>
    <property type="evidence" value="ECO:0007669"/>
    <property type="project" value="TreeGrafter"/>
</dbReference>
<dbReference type="GO" id="GO:0051082">
    <property type="term" value="F:unfolded protein binding"/>
    <property type="evidence" value="ECO:0007669"/>
    <property type="project" value="TreeGrafter"/>
</dbReference>
<dbReference type="GO" id="GO:0051085">
    <property type="term" value="P:chaperone cofactor-dependent protein refolding"/>
    <property type="evidence" value="ECO:0007669"/>
    <property type="project" value="TreeGrafter"/>
</dbReference>
<dbReference type="CDD" id="cd00320">
    <property type="entry name" value="cpn10"/>
    <property type="match status" value="1"/>
</dbReference>
<dbReference type="FunFam" id="2.30.33.40:FF:000001">
    <property type="entry name" value="10 kDa chaperonin"/>
    <property type="match status" value="1"/>
</dbReference>
<dbReference type="Gene3D" id="2.30.33.40">
    <property type="entry name" value="GroES chaperonin"/>
    <property type="match status" value="1"/>
</dbReference>
<dbReference type="HAMAP" id="MF_00580">
    <property type="entry name" value="CH10"/>
    <property type="match status" value="1"/>
</dbReference>
<dbReference type="InterPro" id="IPR020818">
    <property type="entry name" value="Chaperonin_GroES"/>
</dbReference>
<dbReference type="InterPro" id="IPR037124">
    <property type="entry name" value="Chaperonin_GroES_sf"/>
</dbReference>
<dbReference type="InterPro" id="IPR018369">
    <property type="entry name" value="Chaprnonin_Cpn10_CS"/>
</dbReference>
<dbReference type="InterPro" id="IPR011032">
    <property type="entry name" value="GroES-like_sf"/>
</dbReference>
<dbReference type="NCBIfam" id="NF001526">
    <property type="entry name" value="PRK00364.1-1"/>
    <property type="match status" value="1"/>
</dbReference>
<dbReference type="NCBIfam" id="NF001531">
    <property type="entry name" value="PRK00364.2-2"/>
    <property type="match status" value="1"/>
</dbReference>
<dbReference type="PANTHER" id="PTHR10772">
    <property type="entry name" value="10 KDA HEAT SHOCK PROTEIN"/>
    <property type="match status" value="1"/>
</dbReference>
<dbReference type="PANTHER" id="PTHR10772:SF58">
    <property type="entry name" value="CO-CHAPERONIN GROES"/>
    <property type="match status" value="1"/>
</dbReference>
<dbReference type="Pfam" id="PF00166">
    <property type="entry name" value="Cpn10"/>
    <property type="match status" value="1"/>
</dbReference>
<dbReference type="PRINTS" id="PR00297">
    <property type="entry name" value="CHAPERONIN10"/>
</dbReference>
<dbReference type="SMART" id="SM00883">
    <property type="entry name" value="Cpn10"/>
    <property type="match status" value="1"/>
</dbReference>
<dbReference type="SUPFAM" id="SSF50129">
    <property type="entry name" value="GroES-like"/>
    <property type="match status" value="1"/>
</dbReference>
<dbReference type="PROSITE" id="PS00681">
    <property type="entry name" value="CHAPERONINS_CPN10"/>
    <property type="match status" value="1"/>
</dbReference>
<comment type="function">
    <text evidence="1">Together with the chaperonin GroEL, plays an essential role in assisting protein folding. The GroEL-GroES system forms a nano-cage that allows encapsulation of the non-native substrate proteins and provides a physical environment optimized to promote and accelerate protein folding. GroES binds to the apical surface of the GroEL ring, thereby capping the opening of the GroEL channel.</text>
</comment>
<comment type="subunit">
    <text evidence="1">Heptamer of 7 subunits arranged in a ring. Interacts with the chaperonin GroEL.</text>
</comment>
<comment type="subcellular location">
    <subcellularLocation>
        <location evidence="1">Cytoplasm</location>
    </subcellularLocation>
</comment>
<comment type="similarity">
    <text evidence="1">Belongs to the GroES chaperonin family.</text>
</comment>
<reference key="1">
    <citation type="journal article" date="2009" name="Science">
        <title>The dynamics and time scale of ongoing genomic erosion in symbiotic bacteria.</title>
        <authorList>
            <person name="Moran N.A."/>
            <person name="McLaughlin H.J."/>
            <person name="Sorek R."/>
        </authorList>
    </citation>
    <scope>NUCLEOTIDE SEQUENCE [LARGE SCALE GENOMIC DNA]</scope>
    <source>
        <strain>Tuc7</strain>
    </source>
</reference>
<accession>B8D6T5</accession>
<proteinExistence type="inferred from homology"/>
<feature type="chain" id="PRO_1000146893" description="Co-chaperonin GroES">
    <location>
        <begin position="1"/>
        <end position="96"/>
    </location>
</feature>
<gene>
    <name evidence="1" type="primary">groES</name>
    <name evidence="1" type="synonym">groS</name>
    <name type="ordered locus">BUAPTUC7_018</name>
</gene>
<name>CH10_BUCAT</name>
<keyword id="KW-0143">Chaperone</keyword>
<keyword id="KW-0963">Cytoplasm</keyword>
<organism>
    <name type="scientific">Buchnera aphidicola subsp. Acyrthosiphon pisum (strain Tuc7)</name>
    <dbReference type="NCBI Taxonomy" id="561501"/>
    <lineage>
        <taxon>Bacteria</taxon>
        <taxon>Pseudomonadati</taxon>
        <taxon>Pseudomonadota</taxon>
        <taxon>Gammaproteobacteria</taxon>
        <taxon>Enterobacterales</taxon>
        <taxon>Erwiniaceae</taxon>
        <taxon>Buchnera</taxon>
    </lineage>
</organism>
<evidence type="ECO:0000255" key="1">
    <source>
        <dbReference type="HAMAP-Rule" id="MF_00580"/>
    </source>
</evidence>
<protein>
    <recommendedName>
        <fullName evidence="1">Co-chaperonin GroES</fullName>
    </recommendedName>
    <alternativeName>
        <fullName evidence="1">10 kDa chaperonin</fullName>
    </alternativeName>
    <alternativeName>
        <fullName evidence="1">Chaperonin-10</fullName>
        <shortName evidence="1">Cpn10</shortName>
    </alternativeName>
</protein>